<accession>A0JXA1</accession>
<feature type="chain" id="PRO_1000006633" description="Aspartate--tRNA(Asp/Asn) ligase">
    <location>
        <begin position="1"/>
        <end position="596"/>
    </location>
</feature>
<feature type="region of interest" description="Aspartate" evidence="1">
    <location>
        <begin position="193"/>
        <end position="196"/>
    </location>
</feature>
<feature type="region of interest" description="Disordered" evidence="2">
    <location>
        <begin position="559"/>
        <end position="596"/>
    </location>
</feature>
<feature type="compositionally biased region" description="Basic and acidic residues" evidence="2">
    <location>
        <begin position="574"/>
        <end position="590"/>
    </location>
</feature>
<feature type="binding site" evidence="1">
    <location>
        <position position="169"/>
    </location>
    <ligand>
        <name>L-aspartate</name>
        <dbReference type="ChEBI" id="CHEBI:29991"/>
    </ligand>
</feature>
<feature type="binding site" evidence="1">
    <location>
        <begin position="215"/>
        <end position="217"/>
    </location>
    <ligand>
        <name>ATP</name>
        <dbReference type="ChEBI" id="CHEBI:30616"/>
    </ligand>
</feature>
<feature type="binding site" evidence="1">
    <location>
        <position position="215"/>
    </location>
    <ligand>
        <name>L-aspartate</name>
        <dbReference type="ChEBI" id="CHEBI:29991"/>
    </ligand>
</feature>
<feature type="binding site" evidence="1">
    <location>
        <position position="224"/>
    </location>
    <ligand>
        <name>ATP</name>
        <dbReference type="ChEBI" id="CHEBI:30616"/>
    </ligand>
</feature>
<feature type="binding site" evidence="1">
    <location>
        <position position="447"/>
    </location>
    <ligand>
        <name>L-aspartate</name>
        <dbReference type="ChEBI" id="CHEBI:29991"/>
    </ligand>
</feature>
<feature type="binding site" evidence="1">
    <location>
        <position position="481"/>
    </location>
    <ligand>
        <name>ATP</name>
        <dbReference type="ChEBI" id="CHEBI:30616"/>
    </ligand>
</feature>
<feature type="binding site" evidence="1">
    <location>
        <position position="488"/>
    </location>
    <ligand>
        <name>L-aspartate</name>
        <dbReference type="ChEBI" id="CHEBI:29991"/>
    </ligand>
</feature>
<feature type="binding site" evidence="1">
    <location>
        <begin position="533"/>
        <end position="536"/>
    </location>
    <ligand>
        <name>ATP</name>
        <dbReference type="ChEBI" id="CHEBI:30616"/>
    </ligand>
</feature>
<feature type="site" description="Important for tRNA non-discrimination" evidence="1">
    <location>
        <position position="31"/>
    </location>
</feature>
<feature type="site" description="Important for tRNA non-discrimination" evidence="1">
    <location>
        <position position="77"/>
    </location>
</feature>
<name>SYDND_ARTS2</name>
<protein>
    <recommendedName>
        <fullName evidence="1">Aspartate--tRNA(Asp/Asn) ligase</fullName>
        <ecNumber evidence="1">6.1.1.23</ecNumber>
    </recommendedName>
    <alternativeName>
        <fullName evidence="1">Aspartyl-tRNA synthetase</fullName>
        <shortName evidence="1">AspRS</shortName>
    </alternativeName>
    <alternativeName>
        <fullName evidence="1">Non-discriminating aspartyl-tRNA synthetase</fullName>
        <shortName evidence="1">ND-AspRS</shortName>
    </alternativeName>
</protein>
<sequence>MLRTHDLGSLRSEHIGQTVTLAGWVGRRRDHGGVAFVDLRDASGVSQVVVREEEVFHGLRNEYVLQVIGTVSQRPEGNENPALATGQIEVIAEKVTILNTSDPLPFQIDEHVEVGEEARLKHRYLDLRRPGPARNMRLRSEANRVARELLHRDGYVEIETPTLTRSTPEGARDFVVPARLAPGSWYALPQSPQLFKQLLQVGGFEKYYQIARCYRDEDFRADRQPEFTQLDIEASFVEQDDIISLGESIVKALWQLIDVEIPTPIQRITYADAMARYGSDKPDLRFGLELTELTEFFKDTNFGVFKAPYVGAVVMPGGASQARRALDAWQEWAKQRGAKGLAYVLFKEDGELAGPVAKNLTDTERAGLADAVGAKPGDCIFFAAGEKTPSRALLGAARVEIGHRTGLINPADWAFCWVVDAPMFEPAAAAVASGDVAVGAGQWTAVHHAFTSPKPEFMDSFDKDPESALSYAYDIVCNGNEIGGGSIRIHERDVQERVFELMGLDKADAETKFGFLLEGFKFGAPPHGGIAFGWDRVVALLAGVESIRDVIAFPKSGGGYDPLTQAPAPITAQQRKEAGVDFKPEAKKADPGATKA</sequence>
<evidence type="ECO:0000255" key="1">
    <source>
        <dbReference type="HAMAP-Rule" id="MF_00044"/>
    </source>
</evidence>
<evidence type="ECO:0000256" key="2">
    <source>
        <dbReference type="SAM" id="MobiDB-lite"/>
    </source>
</evidence>
<keyword id="KW-0030">Aminoacyl-tRNA synthetase</keyword>
<keyword id="KW-0067">ATP-binding</keyword>
<keyword id="KW-0963">Cytoplasm</keyword>
<keyword id="KW-0436">Ligase</keyword>
<keyword id="KW-0547">Nucleotide-binding</keyword>
<keyword id="KW-0648">Protein biosynthesis</keyword>
<keyword id="KW-1185">Reference proteome</keyword>
<dbReference type="EC" id="6.1.1.23" evidence="1"/>
<dbReference type="EMBL" id="CP000454">
    <property type="protein sequence ID" value="ABK03671.1"/>
    <property type="molecule type" value="Genomic_DNA"/>
</dbReference>
<dbReference type="RefSeq" id="WP_011692135.1">
    <property type="nucleotide sequence ID" value="NC_008541.1"/>
</dbReference>
<dbReference type="SMR" id="A0JXA1"/>
<dbReference type="STRING" id="290399.Arth_2291"/>
<dbReference type="KEGG" id="art:Arth_2291"/>
<dbReference type="eggNOG" id="COG0173">
    <property type="taxonomic scope" value="Bacteria"/>
</dbReference>
<dbReference type="HOGENOM" id="CLU_014330_3_2_11"/>
<dbReference type="OrthoDB" id="9802326at2"/>
<dbReference type="Proteomes" id="UP000000754">
    <property type="component" value="Chromosome"/>
</dbReference>
<dbReference type="GO" id="GO:0005737">
    <property type="term" value="C:cytoplasm"/>
    <property type="evidence" value="ECO:0007669"/>
    <property type="project" value="UniProtKB-SubCell"/>
</dbReference>
<dbReference type="GO" id="GO:0004815">
    <property type="term" value="F:aspartate-tRNA ligase activity"/>
    <property type="evidence" value="ECO:0007669"/>
    <property type="project" value="UniProtKB-UniRule"/>
</dbReference>
<dbReference type="GO" id="GO:0050560">
    <property type="term" value="F:aspartate-tRNA(Asn) ligase activity"/>
    <property type="evidence" value="ECO:0007669"/>
    <property type="project" value="UniProtKB-EC"/>
</dbReference>
<dbReference type="GO" id="GO:0005524">
    <property type="term" value="F:ATP binding"/>
    <property type="evidence" value="ECO:0007669"/>
    <property type="project" value="UniProtKB-UniRule"/>
</dbReference>
<dbReference type="GO" id="GO:0003676">
    <property type="term" value="F:nucleic acid binding"/>
    <property type="evidence" value="ECO:0007669"/>
    <property type="project" value="InterPro"/>
</dbReference>
<dbReference type="GO" id="GO:0006422">
    <property type="term" value="P:aspartyl-tRNA aminoacylation"/>
    <property type="evidence" value="ECO:0007669"/>
    <property type="project" value="UniProtKB-UniRule"/>
</dbReference>
<dbReference type="CDD" id="cd00777">
    <property type="entry name" value="AspRS_core"/>
    <property type="match status" value="1"/>
</dbReference>
<dbReference type="CDD" id="cd04317">
    <property type="entry name" value="EcAspRS_like_N"/>
    <property type="match status" value="1"/>
</dbReference>
<dbReference type="Gene3D" id="3.30.930.10">
    <property type="entry name" value="Bira Bifunctional Protein, Domain 2"/>
    <property type="match status" value="1"/>
</dbReference>
<dbReference type="Gene3D" id="3.30.1360.30">
    <property type="entry name" value="GAD-like domain"/>
    <property type="match status" value="1"/>
</dbReference>
<dbReference type="Gene3D" id="2.40.50.140">
    <property type="entry name" value="Nucleic acid-binding proteins"/>
    <property type="match status" value="1"/>
</dbReference>
<dbReference type="HAMAP" id="MF_00044">
    <property type="entry name" value="Asp_tRNA_synth_type1"/>
    <property type="match status" value="1"/>
</dbReference>
<dbReference type="InterPro" id="IPR004364">
    <property type="entry name" value="Aa-tRNA-synt_II"/>
</dbReference>
<dbReference type="InterPro" id="IPR006195">
    <property type="entry name" value="aa-tRNA-synth_II"/>
</dbReference>
<dbReference type="InterPro" id="IPR045864">
    <property type="entry name" value="aa-tRNA-synth_II/BPL/LPL"/>
</dbReference>
<dbReference type="InterPro" id="IPR004524">
    <property type="entry name" value="Asp-tRNA-ligase_1"/>
</dbReference>
<dbReference type="InterPro" id="IPR047089">
    <property type="entry name" value="Asp-tRNA-ligase_1_N"/>
</dbReference>
<dbReference type="InterPro" id="IPR002312">
    <property type="entry name" value="Asp/Asn-tRNA-synth_IIb"/>
</dbReference>
<dbReference type="InterPro" id="IPR047090">
    <property type="entry name" value="AspRS_core"/>
</dbReference>
<dbReference type="InterPro" id="IPR004115">
    <property type="entry name" value="GAD-like_sf"/>
</dbReference>
<dbReference type="InterPro" id="IPR029351">
    <property type="entry name" value="GAD_dom"/>
</dbReference>
<dbReference type="InterPro" id="IPR012340">
    <property type="entry name" value="NA-bd_OB-fold"/>
</dbReference>
<dbReference type="InterPro" id="IPR004365">
    <property type="entry name" value="NA-bd_OB_tRNA"/>
</dbReference>
<dbReference type="NCBIfam" id="TIGR00459">
    <property type="entry name" value="aspS_bact"/>
    <property type="match status" value="1"/>
</dbReference>
<dbReference type="NCBIfam" id="NF001750">
    <property type="entry name" value="PRK00476.1"/>
    <property type="match status" value="1"/>
</dbReference>
<dbReference type="PANTHER" id="PTHR22594:SF5">
    <property type="entry name" value="ASPARTATE--TRNA LIGASE, MITOCHONDRIAL"/>
    <property type="match status" value="1"/>
</dbReference>
<dbReference type="PANTHER" id="PTHR22594">
    <property type="entry name" value="ASPARTYL/LYSYL-TRNA SYNTHETASE"/>
    <property type="match status" value="1"/>
</dbReference>
<dbReference type="Pfam" id="PF02938">
    <property type="entry name" value="GAD"/>
    <property type="match status" value="1"/>
</dbReference>
<dbReference type="Pfam" id="PF00152">
    <property type="entry name" value="tRNA-synt_2"/>
    <property type="match status" value="1"/>
</dbReference>
<dbReference type="Pfam" id="PF01336">
    <property type="entry name" value="tRNA_anti-codon"/>
    <property type="match status" value="1"/>
</dbReference>
<dbReference type="PRINTS" id="PR01042">
    <property type="entry name" value="TRNASYNTHASP"/>
</dbReference>
<dbReference type="SUPFAM" id="SSF55681">
    <property type="entry name" value="Class II aaRS and biotin synthetases"/>
    <property type="match status" value="1"/>
</dbReference>
<dbReference type="SUPFAM" id="SSF55261">
    <property type="entry name" value="GAD domain-like"/>
    <property type="match status" value="1"/>
</dbReference>
<dbReference type="SUPFAM" id="SSF50249">
    <property type="entry name" value="Nucleic acid-binding proteins"/>
    <property type="match status" value="1"/>
</dbReference>
<dbReference type="PROSITE" id="PS50862">
    <property type="entry name" value="AA_TRNA_LIGASE_II"/>
    <property type="match status" value="1"/>
</dbReference>
<reference key="1">
    <citation type="journal article" date="2013" name="Stand. Genomic Sci.">
        <title>Complete genome sequence of Arthrobacter sp. strain FB24.</title>
        <authorList>
            <person name="Nakatsu C.H."/>
            <person name="Barabote R."/>
            <person name="Thompson S."/>
            <person name="Bruce D."/>
            <person name="Detter C."/>
            <person name="Brettin T."/>
            <person name="Han C."/>
            <person name="Beasley F."/>
            <person name="Chen W."/>
            <person name="Konopka A."/>
            <person name="Xie G."/>
        </authorList>
    </citation>
    <scope>NUCLEOTIDE SEQUENCE [LARGE SCALE GENOMIC DNA]</scope>
    <source>
        <strain>FB24</strain>
    </source>
</reference>
<organism>
    <name type="scientific">Arthrobacter sp. (strain FB24)</name>
    <dbReference type="NCBI Taxonomy" id="290399"/>
    <lineage>
        <taxon>Bacteria</taxon>
        <taxon>Bacillati</taxon>
        <taxon>Actinomycetota</taxon>
        <taxon>Actinomycetes</taxon>
        <taxon>Micrococcales</taxon>
        <taxon>Micrococcaceae</taxon>
        <taxon>Arthrobacter</taxon>
    </lineage>
</organism>
<proteinExistence type="inferred from homology"/>
<comment type="function">
    <text evidence="1">Aspartyl-tRNA synthetase with relaxed tRNA specificity since it is able to aspartylate not only its cognate tRNA(Asp) but also tRNA(Asn). Reaction proceeds in two steps: L-aspartate is first activated by ATP to form Asp-AMP and then transferred to the acceptor end of tRNA(Asp/Asn).</text>
</comment>
<comment type="catalytic activity">
    <reaction evidence="1">
        <text>tRNA(Asx) + L-aspartate + ATP = L-aspartyl-tRNA(Asx) + AMP + diphosphate</text>
        <dbReference type="Rhea" id="RHEA:18349"/>
        <dbReference type="Rhea" id="RHEA-COMP:9710"/>
        <dbReference type="Rhea" id="RHEA-COMP:9711"/>
        <dbReference type="ChEBI" id="CHEBI:29991"/>
        <dbReference type="ChEBI" id="CHEBI:30616"/>
        <dbReference type="ChEBI" id="CHEBI:33019"/>
        <dbReference type="ChEBI" id="CHEBI:78442"/>
        <dbReference type="ChEBI" id="CHEBI:78516"/>
        <dbReference type="ChEBI" id="CHEBI:456215"/>
        <dbReference type="EC" id="6.1.1.23"/>
    </reaction>
</comment>
<comment type="subunit">
    <text evidence="1">Homodimer.</text>
</comment>
<comment type="subcellular location">
    <subcellularLocation>
        <location evidence="1">Cytoplasm</location>
    </subcellularLocation>
</comment>
<comment type="similarity">
    <text evidence="1">Belongs to the class-II aminoacyl-tRNA synthetase family. Type 1 subfamily.</text>
</comment>
<gene>
    <name evidence="1" type="primary">aspS</name>
    <name type="ordered locus">Arth_2291</name>
</gene>